<keyword id="KW-1003">Cell membrane</keyword>
<keyword id="KW-0472">Membrane</keyword>
<keyword id="KW-1185">Reference proteome</keyword>
<keyword id="KW-0812">Transmembrane</keyword>
<keyword id="KW-1133">Transmembrane helix</keyword>
<keyword id="KW-0813">Transport</keyword>
<keyword id="KW-0843">Virulence</keyword>
<proteinExistence type="inferred from homology"/>
<protein>
    <recommendedName>
        <fullName evidence="5">MFS antiporter QDR2</fullName>
    </recommendedName>
</protein>
<dbReference type="EMBL" id="CP017625">
    <property type="protein sequence ID" value="AOW28568.1"/>
    <property type="molecule type" value="Genomic_DNA"/>
</dbReference>
<dbReference type="RefSeq" id="XP_714698.1">
    <property type="nucleotide sequence ID" value="XM_709605.1"/>
</dbReference>
<dbReference type="SMR" id="Q59YT1"/>
<dbReference type="FunCoup" id="Q59YT1">
    <property type="interactions" value="70"/>
</dbReference>
<dbReference type="STRING" id="237561.Q59YT1"/>
<dbReference type="EnsemblFungi" id="C3_05570W_A-T">
    <property type="protein sequence ID" value="C3_05570W_A-T-p1"/>
    <property type="gene ID" value="C3_05570W_A"/>
</dbReference>
<dbReference type="GeneID" id="3643661"/>
<dbReference type="KEGG" id="cal:CAALFM_C305570WA"/>
<dbReference type="CGD" id="CAL0000179742">
    <property type="gene designation" value="QDR2"/>
</dbReference>
<dbReference type="VEuPathDB" id="FungiDB:C3_05570W_A"/>
<dbReference type="eggNOG" id="KOG0255">
    <property type="taxonomic scope" value="Eukaryota"/>
</dbReference>
<dbReference type="HOGENOM" id="CLU_008455_8_4_1"/>
<dbReference type="InParanoid" id="Q59YT1"/>
<dbReference type="OMA" id="CICASMV"/>
<dbReference type="OrthoDB" id="440553at2759"/>
<dbReference type="Proteomes" id="UP000000559">
    <property type="component" value="Chromosome 3"/>
</dbReference>
<dbReference type="GO" id="GO:0045121">
    <property type="term" value="C:membrane raft"/>
    <property type="evidence" value="ECO:0000314"/>
    <property type="project" value="CGD"/>
</dbReference>
<dbReference type="GO" id="GO:0005886">
    <property type="term" value="C:plasma membrane"/>
    <property type="evidence" value="ECO:0000318"/>
    <property type="project" value="GO_Central"/>
</dbReference>
<dbReference type="GO" id="GO:0022857">
    <property type="term" value="F:transmembrane transporter activity"/>
    <property type="evidence" value="ECO:0000318"/>
    <property type="project" value="GO_Central"/>
</dbReference>
<dbReference type="GO" id="GO:0055088">
    <property type="term" value="P:lipid homeostasis"/>
    <property type="evidence" value="ECO:0000315"/>
    <property type="project" value="CGD"/>
</dbReference>
<dbReference type="GO" id="GO:0001765">
    <property type="term" value="P:membrane raft assembly"/>
    <property type="evidence" value="ECO:0000315"/>
    <property type="project" value="CGD"/>
</dbReference>
<dbReference type="GO" id="GO:0055085">
    <property type="term" value="P:transmembrane transport"/>
    <property type="evidence" value="ECO:0000318"/>
    <property type="project" value="GO_Central"/>
</dbReference>
<dbReference type="CDD" id="cd17323">
    <property type="entry name" value="MFS_Tpo1_MDR_like"/>
    <property type="match status" value="1"/>
</dbReference>
<dbReference type="FunFam" id="1.20.1250.20:FF:000172">
    <property type="entry name" value="MFS multidrug resistance transporter"/>
    <property type="match status" value="1"/>
</dbReference>
<dbReference type="Gene3D" id="1.20.1250.20">
    <property type="entry name" value="MFS general substrate transporter like domains"/>
    <property type="match status" value="1"/>
</dbReference>
<dbReference type="InterPro" id="IPR011701">
    <property type="entry name" value="MFS"/>
</dbReference>
<dbReference type="InterPro" id="IPR020846">
    <property type="entry name" value="MFS_dom"/>
</dbReference>
<dbReference type="InterPro" id="IPR036259">
    <property type="entry name" value="MFS_trans_sf"/>
</dbReference>
<dbReference type="PANTHER" id="PTHR23502">
    <property type="entry name" value="MAJOR FACILITATOR SUPERFAMILY"/>
    <property type="match status" value="1"/>
</dbReference>
<dbReference type="PANTHER" id="PTHR23502:SF51">
    <property type="entry name" value="QUINIDINE RESISTANCE PROTEIN 1-RELATED"/>
    <property type="match status" value="1"/>
</dbReference>
<dbReference type="Pfam" id="PF07690">
    <property type="entry name" value="MFS_1"/>
    <property type="match status" value="1"/>
</dbReference>
<dbReference type="SUPFAM" id="SSF103473">
    <property type="entry name" value="MFS general substrate transporter"/>
    <property type="match status" value="1"/>
</dbReference>
<dbReference type="PROSITE" id="PS50850">
    <property type="entry name" value="MFS"/>
    <property type="match status" value="1"/>
</dbReference>
<organism>
    <name type="scientific">Candida albicans (strain SC5314 / ATCC MYA-2876)</name>
    <name type="common">Yeast</name>
    <dbReference type="NCBI Taxonomy" id="237561"/>
    <lineage>
        <taxon>Eukaryota</taxon>
        <taxon>Fungi</taxon>
        <taxon>Dikarya</taxon>
        <taxon>Ascomycota</taxon>
        <taxon>Saccharomycotina</taxon>
        <taxon>Pichiomycetes</taxon>
        <taxon>Debaryomycetaceae</taxon>
        <taxon>Candida/Lodderomyces clade</taxon>
        <taxon>Candida</taxon>
    </lineage>
</organism>
<sequence>MLSTTQSVTEPTEVTSKKVEDIEKENDEETPYSIFTSYDRLVLIVILSLIGFWSTISSPIYFPALPTLTSYFHTSSSIMNISVVAYLIFQGIAPTISSNLADTFGRRPVILASIIVFCASCVAISQTNVYWLLAVLRCIQAAGIAAVISISSGVAGDVCTRANRGSMVGAVAGLQLVGNGIGGLVGAALISSFNSWRSIFIFLTIGGGVTFILAIFILPETSRKLVGNGSVVPKNILNKSPYIYLPHFKKRMNNDITTIVPATRFDLLGPLKIFFQKNVFCTLLPVGIHFAAWTMVLTSLSTELESRYHYSVMHVGLIYLPQGIACIAGSLVVGKSLDWYYRYRKTIYDQEVECLPLDERPQFNIVATRLTLSVVPALLMIIGLVIFGWCIQYKRHIISIIISTILVSFSASVFIAICTTMLVDLYPNNGSGSTSCLNLMRCWLAALGAGVLDSMINAMNVGGTYTVVAGFCILFDLALIYVLHNAKKKFSNSGPTTTKSPPKQ</sequence>
<name>QDR2_CANAL</name>
<accession>Q59YT1</accession>
<accession>A0A1D8PKF5</accession>
<feature type="chain" id="PRO_0000431600" description="MFS antiporter QDR2">
    <location>
        <begin position="1"/>
        <end position="504"/>
    </location>
</feature>
<feature type="topological domain" description="Cytoplasmic" evidence="5">
    <location>
        <begin position="1"/>
        <end position="41"/>
    </location>
</feature>
<feature type="transmembrane region" description="Helical; Name=1" evidence="1">
    <location>
        <begin position="42"/>
        <end position="62"/>
    </location>
</feature>
<feature type="topological domain" description="Extracellular" evidence="5">
    <location>
        <begin position="63"/>
        <end position="75"/>
    </location>
</feature>
<feature type="transmembrane region" description="Helical; Name=2" evidence="1">
    <location>
        <begin position="76"/>
        <end position="96"/>
    </location>
</feature>
<feature type="topological domain" description="Cytoplasmic" evidence="5">
    <location>
        <begin position="97"/>
        <end position="106"/>
    </location>
</feature>
<feature type="transmembrane region" description="Helical; Name=3" evidence="1">
    <location>
        <begin position="107"/>
        <end position="129"/>
    </location>
</feature>
<feature type="topological domain" description="Extracellular" evidence="5">
    <location>
        <begin position="130"/>
        <end position="132"/>
    </location>
</feature>
<feature type="transmembrane region" description="Helical; Name=4" evidence="1">
    <location>
        <begin position="133"/>
        <end position="155"/>
    </location>
</feature>
<feature type="topological domain" description="Cytoplasmic" evidence="5">
    <location>
        <begin position="156"/>
        <end position="169"/>
    </location>
</feature>
<feature type="transmembrane region" description="Helical; Name=5" evidence="1">
    <location>
        <begin position="170"/>
        <end position="190"/>
    </location>
</feature>
<feature type="topological domain" description="Extracellular" evidence="5">
    <location>
        <begin position="191"/>
        <end position="198"/>
    </location>
</feature>
<feature type="transmembrane region" description="Helical; Name=6" evidence="1">
    <location>
        <begin position="199"/>
        <end position="219"/>
    </location>
</feature>
<feature type="topological domain" description="Cytoplasmic" evidence="5">
    <location>
        <begin position="220"/>
        <end position="278"/>
    </location>
</feature>
<feature type="transmembrane region" description="Helical; Name=7" evidence="1">
    <location>
        <begin position="279"/>
        <end position="299"/>
    </location>
</feature>
<feature type="topological domain" description="Extracellular" evidence="5">
    <location>
        <begin position="300"/>
        <end position="311"/>
    </location>
</feature>
<feature type="transmembrane region" description="Helical; Name=8" evidence="1">
    <location>
        <begin position="312"/>
        <end position="332"/>
    </location>
</feature>
<feature type="topological domain" description="Cytoplasmic" evidence="5">
    <location>
        <begin position="333"/>
        <end position="370"/>
    </location>
</feature>
<feature type="transmembrane region" description="Helical; Name=9" evidence="1">
    <location>
        <begin position="371"/>
        <end position="391"/>
    </location>
</feature>
<feature type="topological domain" description="Extracellular" evidence="5">
    <location>
        <begin position="392"/>
        <end position="396"/>
    </location>
</feature>
<feature type="transmembrane region" description="Helical; Name=10" evidence="1">
    <location>
        <begin position="397"/>
        <end position="417"/>
    </location>
</feature>
<feature type="topological domain" description="Cytoplasmic" evidence="5">
    <location>
        <begin position="418"/>
        <end position="438"/>
    </location>
</feature>
<feature type="transmembrane region" description="Helical; Name=11" evidence="1">
    <location>
        <begin position="439"/>
        <end position="456"/>
    </location>
</feature>
<feature type="topological domain" description="Extracellular" evidence="5">
    <location>
        <begin position="457"/>
        <end position="460"/>
    </location>
</feature>
<feature type="transmembrane region" description="Helical; Name=12" evidence="1">
    <location>
        <begin position="461"/>
        <end position="483"/>
    </location>
</feature>
<feature type="topological domain" description="Cytoplasmic" evidence="5">
    <location>
        <begin position="484"/>
        <end position="504"/>
    </location>
</feature>
<feature type="region of interest" description="Disordered" evidence="2">
    <location>
        <begin position="1"/>
        <end position="23"/>
    </location>
</feature>
<feature type="compositionally biased region" description="Polar residues" evidence="2">
    <location>
        <begin position="1"/>
        <end position="14"/>
    </location>
</feature>
<comment type="function">
    <text evidence="3">MFS antiporter that does not display functional linkage as drug transporter and performs functions that significantly affect biofilm development and virulence. No substrate for transport has been identified yet, but plays an important role in the growth in the host.</text>
</comment>
<comment type="subcellular location">
    <subcellularLocation>
        <location evidence="3">Cell membrane</location>
        <topology evidence="3">Multi-pass membrane protein</topology>
    </subcellularLocation>
    <text evidence="3 4">Preferentially localizes to membrane rafts.</text>
</comment>
<comment type="disruption phenotype">
    <text evidence="3">Leads to defects in biofilm architecture and attenuated virulence.</text>
</comment>
<comment type="similarity">
    <text evidence="5">Belongs to the major facilitator superfamily. CAR1 family.</text>
</comment>
<gene>
    <name type="primary">QDR2</name>
    <name type="ordered locus">CAALFM_C305570WA</name>
    <name type="ORF">CaO19.6992</name>
</gene>
<reference key="1">
    <citation type="journal article" date="2004" name="Proc. Natl. Acad. Sci. U.S.A.">
        <title>The diploid genome sequence of Candida albicans.</title>
        <authorList>
            <person name="Jones T."/>
            <person name="Federspiel N.A."/>
            <person name="Chibana H."/>
            <person name="Dungan J."/>
            <person name="Kalman S."/>
            <person name="Magee B.B."/>
            <person name="Newport G."/>
            <person name="Thorstenson Y.R."/>
            <person name="Agabian N."/>
            <person name="Magee P.T."/>
            <person name="Davis R.W."/>
            <person name="Scherer S."/>
        </authorList>
    </citation>
    <scope>NUCLEOTIDE SEQUENCE [LARGE SCALE GENOMIC DNA]</scope>
    <source>
        <strain>SC5314 / ATCC MYA-2876</strain>
    </source>
</reference>
<reference key="2">
    <citation type="journal article" date="2007" name="Genome Biol.">
        <title>Assembly of the Candida albicans genome into sixteen supercontigs aligned on the eight chromosomes.</title>
        <authorList>
            <person name="van het Hoog M."/>
            <person name="Rast T.J."/>
            <person name="Martchenko M."/>
            <person name="Grindle S."/>
            <person name="Dignard D."/>
            <person name="Hogues H."/>
            <person name="Cuomo C."/>
            <person name="Berriman M."/>
            <person name="Scherer S."/>
            <person name="Magee B.B."/>
            <person name="Whiteway M."/>
            <person name="Chibana H."/>
            <person name="Nantel A."/>
            <person name="Magee P.T."/>
        </authorList>
    </citation>
    <scope>GENOME REANNOTATION</scope>
    <source>
        <strain>SC5314 / ATCC MYA-2876</strain>
    </source>
</reference>
<reference key="3">
    <citation type="journal article" date="2013" name="Genome Biol.">
        <title>Assembly of a phased diploid Candida albicans genome facilitates allele-specific measurements and provides a simple model for repeat and indel structure.</title>
        <authorList>
            <person name="Muzzey D."/>
            <person name="Schwartz K."/>
            <person name="Weissman J.S."/>
            <person name="Sherlock G."/>
        </authorList>
    </citation>
    <scope>NUCLEOTIDE SEQUENCE [LARGE SCALE GENOMIC DNA]</scope>
    <scope>GENOME REANNOTATION</scope>
    <source>
        <strain>SC5314 / ATCC MYA-2876</strain>
    </source>
</reference>
<reference key="4">
    <citation type="journal article" date="2008" name="BMC Genomics">
        <title>MFS transportome of the human pathogenic yeast Candida albicans.</title>
        <authorList>
            <person name="Gaur M."/>
            <person name="Puri N."/>
            <person name="Manoharlal R."/>
            <person name="Rai V."/>
            <person name="Mukhopadhayay G."/>
            <person name="Choudhury D."/>
            <person name="Prasad R."/>
        </authorList>
    </citation>
    <scope>IDENTIFICATION</scope>
</reference>
<reference key="5">
    <citation type="journal article" date="2014" name="Biochem. J.">
        <title>Novel role of a family of major facilitator transporters in biofilm development and virulence of Candida albicans.</title>
        <authorList>
            <person name="Shah A.H."/>
            <person name="Singh A."/>
            <person name="Dhamgaye S."/>
            <person name="Chauhan N."/>
            <person name="Vandeputte P."/>
            <person name="Suneetha K.J."/>
            <person name="Kaur R."/>
            <person name="Mukherjee P.K."/>
            <person name="Chandra J."/>
            <person name="Ghannoum M.A."/>
            <person name="Sanglard D."/>
            <person name="Goswami S.K."/>
            <person name="Prasad R."/>
        </authorList>
    </citation>
    <scope>SUBCELLULAR LOCATION</scope>
    <scope>DISRUPTION PHENOTYPE</scope>
    <scope>FUNCTION</scope>
</reference>
<evidence type="ECO:0000255" key="1"/>
<evidence type="ECO:0000256" key="2">
    <source>
        <dbReference type="SAM" id="MobiDB-lite"/>
    </source>
</evidence>
<evidence type="ECO:0000269" key="3">
    <source>
    </source>
</evidence>
<evidence type="ECO:0000303" key="4">
    <source>
    </source>
</evidence>
<evidence type="ECO:0000305" key="5"/>